<comment type="subcellular location">
    <subcellularLocation>
        <location evidence="3">Mitochondrion</location>
    </subcellularLocation>
</comment>
<comment type="similarity">
    <text evidence="3">Belongs to the PPR family. P subfamily.</text>
</comment>
<comment type="online information" name="Pentatricopeptide repeat proteins">
    <link uri="https://ppr.plantenergy.uwa.edu.au"/>
</comment>
<gene>
    <name type="ordered locus">At5g12100</name>
    <name type="ORF">MXC9.6</name>
</gene>
<organism>
    <name type="scientific">Arabidopsis thaliana</name>
    <name type="common">Mouse-ear cress</name>
    <dbReference type="NCBI Taxonomy" id="3702"/>
    <lineage>
        <taxon>Eukaryota</taxon>
        <taxon>Viridiplantae</taxon>
        <taxon>Streptophyta</taxon>
        <taxon>Embryophyta</taxon>
        <taxon>Tracheophyta</taxon>
        <taxon>Spermatophyta</taxon>
        <taxon>Magnoliopsida</taxon>
        <taxon>eudicotyledons</taxon>
        <taxon>Gunneridae</taxon>
        <taxon>Pentapetalae</taxon>
        <taxon>rosids</taxon>
        <taxon>malvids</taxon>
        <taxon>Brassicales</taxon>
        <taxon>Brassicaceae</taxon>
        <taxon>Camelineae</taxon>
        <taxon>Arabidopsis</taxon>
    </lineage>
</organism>
<proteinExistence type="evidence at transcript level"/>
<sequence>MVTRLRLVSRSSRYATVKFTDSVSACSCRRLFSASTDPEPESQPEQAPPTNPVTGDEKLRNLRVLLQQNRIETARGVLSSLLRSDSTPFASPKELFSAFSLSSPSLKHDFSYLLLSVLLNESKMISEAADLFFALRNEGIYPSSDSLTLLLDHLVKTKQFRVTINVFLNILESDFRPSKFMYGKAIQAAVKLSDVGKGLELFNRMKHDRIYPSVFIYNVLIDGLCKGKRMNDAEQLFDEMLARRLLPSLITYNTLIDGYCKAGNPEKSFKVRERMKADHIEPSLITFNTLLKGLFKAGMVEDAENVLKEMKDLGFVPDAFTFSILFDGYSSNEKAEAALGVYETAVDSGVKMNAYTCSILLNALCKEGKIEKAEEILGREMAKGLVPNEVIYNTMIDGYCRKGDLVGARMKIEAMEKQGMKPDHLAYNCLIRRFCELGEMENAEKEVNKMKLKGVSPSVETYNILIGGYGRKYEFDKCFDILKEMEDNGTMPNVVSYGTLINCLCKGSKLLEAQIVKRDMEDRGVSPKVRIYNMLIDGCCSKGKIEDAFRFSKEMLKKGIELNLVTYNTLIDGLSMTGKLSEAEDLLLEISRKGLKPDVFTYNSLISGYGFAGNVQRCIALYEEMKRSGIKPTLKTYHLLISLCTKEGIELTERLFGEMSLKPDLLVYNGVLHCYAVHGDMEKAFNLQKQMIEKSIGLDKTTYNSLILGQLKVGKLCEVRSLIDEMNAREMEPEADTYNIIVKGHCEVKDYMSAYVWYREMQEKGFLLDVCIGNELVSGLKEEWRSKEAEIVISEMNGRMLGDVTVDEDLSATEKL</sequence>
<keyword id="KW-0496">Mitochondrion</keyword>
<keyword id="KW-1185">Reference proteome</keyword>
<keyword id="KW-0677">Repeat</keyword>
<keyword id="KW-0809">Transit peptide</keyword>
<feature type="transit peptide" description="Mitochondrion" evidence="1">
    <location>
        <begin position="1"/>
        <end position="39"/>
    </location>
</feature>
<feature type="chain" id="PRO_0000363513" description="Pentatricopeptide repeat-containing protein At5g12100, mitochondrial">
    <location>
        <begin position="40"/>
        <end position="816"/>
    </location>
</feature>
<feature type="repeat" description="PPR 1">
    <location>
        <begin position="108"/>
        <end position="142"/>
    </location>
</feature>
<feature type="repeat" description="PPR 2">
    <location>
        <begin position="143"/>
        <end position="177"/>
    </location>
</feature>
<feature type="repeat" description="PPR 3">
    <location>
        <begin position="178"/>
        <end position="212"/>
    </location>
</feature>
<feature type="repeat" description="PPR 4">
    <location>
        <begin position="213"/>
        <end position="247"/>
    </location>
</feature>
<feature type="repeat" description="PPR 5">
    <location>
        <begin position="248"/>
        <end position="282"/>
    </location>
</feature>
<feature type="repeat" description="PPR 6">
    <location>
        <begin position="283"/>
        <end position="317"/>
    </location>
</feature>
<feature type="repeat" description="PPR 7">
    <location>
        <begin position="318"/>
        <end position="352"/>
    </location>
</feature>
<feature type="repeat" description="PPR 8">
    <location>
        <begin position="353"/>
        <end position="387"/>
    </location>
</feature>
<feature type="repeat" description="PPR 9">
    <location>
        <begin position="388"/>
        <end position="422"/>
    </location>
</feature>
<feature type="repeat" description="PPR 10">
    <location>
        <begin position="423"/>
        <end position="457"/>
    </location>
</feature>
<feature type="repeat" description="PPR 11">
    <location>
        <begin position="458"/>
        <end position="492"/>
    </location>
</feature>
<feature type="repeat" description="PPR 12">
    <location>
        <begin position="493"/>
        <end position="527"/>
    </location>
</feature>
<feature type="repeat" description="PPR 13">
    <location>
        <begin position="528"/>
        <end position="562"/>
    </location>
</feature>
<feature type="repeat" description="PPR 14">
    <location>
        <begin position="563"/>
        <end position="597"/>
    </location>
</feature>
<feature type="repeat" description="PPR 15">
    <location>
        <begin position="598"/>
        <end position="632"/>
    </location>
</feature>
<feature type="repeat" description="PPR 16">
    <location>
        <begin position="633"/>
        <end position="662"/>
    </location>
</feature>
<feature type="repeat" description="PPR 17">
    <location>
        <begin position="664"/>
        <end position="698"/>
    </location>
</feature>
<feature type="repeat" description="PPR 18">
    <location>
        <begin position="699"/>
        <end position="733"/>
    </location>
</feature>
<feature type="repeat" description="PPR 19">
    <location>
        <begin position="734"/>
        <end position="768"/>
    </location>
</feature>
<feature type="repeat" description="PPR 20">
    <location>
        <begin position="769"/>
        <end position="803"/>
    </location>
</feature>
<feature type="region of interest" description="Disordered" evidence="2">
    <location>
        <begin position="34"/>
        <end position="57"/>
    </location>
</feature>
<evidence type="ECO:0000255" key="1"/>
<evidence type="ECO:0000256" key="2">
    <source>
        <dbReference type="SAM" id="MobiDB-lite"/>
    </source>
</evidence>
<evidence type="ECO:0000305" key="3"/>
<accession>Q9FMQ1</accession>
<dbReference type="EMBL" id="AB007727">
    <property type="protein sequence ID" value="BAB10028.1"/>
    <property type="molecule type" value="Genomic_DNA"/>
</dbReference>
<dbReference type="EMBL" id="CP002688">
    <property type="protein sequence ID" value="AED91763.1"/>
    <property type="molecule type" value="Genomic_DNA"/>
</dbReference>
<dbReference type="EMBL" id="BT005769">
    <property type="protein sequence ID" value="AAO64173.1"/>
    <property type="molecule type" value="mRNA"/>
</dbReference>
<dbReference type="EMBL" id="BT006094">
    <property type="protein sequence ID" value="AAP04079.1"/>
    <property type="molecule type" value="mRNA"/>
</dbReference>
<dbReference type="EMBL" id="AK228623">
    <property type="protein sequence ID" value="BAF00534.1"/>
    <property type="molecule type" value="mRNA"/>
</dbReference>
<dbReference type="RefSeq" id="NP_196771.1">
    <property type="nucleotide sequence ID" value="NM_121248.5"/>
</dbReference>
<dbReference type="SMR" id="Q9FMQ1"/>
<dbReference type="FunCoup" id="Q9FMQ1">
    <property type="interactions" value="651"/>
</dbReference>
<dbReference type="STRING" id="3702.Q9FMQ1"/>
<dbReference type="PaxDb" id="3702-AT5G12100.1"/>
<dbReference type="ProteomicsDB" id="249005"/>
<dbReference type="EnsemblPlants" id="AT5G12100.1">
    <property type="protein sequence ID" value="AT5G12100.1"/>
    <property type="gene ID" value="AT5G12100"/>
</dbReference>
<dbReference type="GeneID" id="831083"/>
<dbReference type="Gramene" id="AT5G12100.1">
    <property type="protein sequence ID" value="AT5G12100.1"/>
    <property type="gene ID" value="AT5G12100"/>
</dbReference>
<dbReference type="KEGG" id="ath:AT5G12100"/>
<dbReference type="Araport" id="AT5G12100"/>
<dbReference type="TAIR" id="AT5G12100"/>
<dbReference type="eggNOG" id="KOG4197">
    <property type="taxonomic scope" value="Eukaryota"/>
</dbReference>
<dbReference type="HOGENOM" id="CLU_002706_49_2_1"/>
<dbReference type="InParanoid" id="Q9FMQ1"/>
<dbReference type="OMA" id="EMFENGF"/>
<dbReference type="PhylomeDB" id="Q9FMQ1"/>
<dbReference type="PRO" id="PR:Q9FMQ1"/>
<dbReference type="Proteomes" id="UP000006548">
    <property type="component" value="Chromosome 5"/>
</dbReference>
<dbReference type="ExpressionAtlas" id="Q9FMQ1">
    <property type="expression patterns" value="baseline and differential"/>
</dbReference>
<dbReference type="GO" id="GO:0005739">
    <property type="term" value="C:mitochondrion"/>
    <property type="evidence" value="ECO:0007669"/>
    <property type="project" value="UniProtKB-SubCell"/>
</dbReference>
<dbReference type="GO" id="GO:0008270">
    <property type="term" value="F:zinc ion binding"/>
    <property type="evidence" value="ECO:0007005"/>
    <property type="project" value="TAIR"/>
</dbReference>
<dbReference type="Gene3D" id="1.25.40.10">
    <property type="entry name" value="Tetratricopeptide repeat domain"/>
    <property type="match status" value="6"/>
</dbReference>
<dbReference type="InterPro" id="IPR002885">
    <property type="entry name" value="Pentatricopeptide_rpt"/>
</dbReference>
<dbReference type="InterPro" id="IPR051222">
    <property type="entry name" value="PPR/CCM1_RNA-binding"/>
</dbReference>
<dbReference type="InterPro" id="IPR011990">
    <property type="entry name" value="TPR-like_helical_dom_sf"/>
</dbReference>
<dbReference type="NCBIfam" id="TIGR00756">
    <property type="entry name" value="PPR"/>
    <property type="match status" value="12"/>
</dbReference>
<dbReference type="PANTHER" id="PTHR47942:SF16">
    <property type="entry name" value="PENTATRICOPEPTIDE REPEAT DOMAIN CONTAINING PROTEIN-RELATED"/>
    <property type="match status" value="1"/>
</dbReference>
<dbReference type="PANTHER" id="PTHR47942">
    <property type="entry name" value="TETRATRICOPEPTIDE REPEAT (TPR)-LIKE SUPERFAMILY PROTEIN-RELATED"/>
    <property type="match status" value="1"/>
</dbReference>
<dbReference type="Pfam" id="PF01535">
    <property type="entry name" value="PPR"/>
    <property type="match status" value="2"/>
</dbReference>
<dbReference type="Pfam" id="PF12854">
    <property type="entry name" value="PPR_1"/>
    <property type="match status" value="1"/>
</dbReference>
<dbReference type="Pfam" id="PF13041">
    <property type="entry name" value="PPR_2"/>
    <property type="match status" value="7"/>
</dbReference>
<dbReference type="SUPFAM" id="SSF81901">
    <property type="entry name" value="HCP-like"/>
    <property type="match status" value="1"/>
</dbReference>
<dbReference type="PROSITE" id="PS51375">
    <property type="entry name" value="PPR"/>
    <property type="match status" value="19"/>
</dbReference>
<name>PP376_ARATH</name>
<protein>
    <recommendedName>
        <fullName>Pentatricopeptide repeat-containing protein At5g12100, mitochondrial</fullName>
    </recommendedName>
</protein>
<reference key="1">
    <citation type="journal article" date="1997" name="DNA Res.">
        <title>Structural analysis of Arabidopsis thaliana chromosome 5. III. Sequence features of the regions of 1,191,918 bp covered by seventeen physically assigned P1 clones.</title>
        <authorList>
            <person name="Nakamura Y."/>
            <person name="Sato S."/>
            <person name="Kaneko T."/>
            <person name="Kotani H."/>
            <person name="Asamizu E."/>
            <person name="Miyajima N."/>
            <person name="Tabata S."/>
        </authorList>
    </citation>
    <scope>NUCLEOTIDE SEQUENCE [LARGE SCALE GENOMIC DNA]</scope>
    <source>
        <strain>cv. Columbia</strain>
    </source>
</reference>
<reference key="2">
    <citation type="journal article" date="2017" name="Plant J.">
        <title>Araport11: a complete reannotation of the Arabidopsis thaliana reference genome.</title>
        <authorList>
            <person name="Cheng C.Y."/>
            <person name="Krishnakumar V."/>
            <person name="Chan A.P."/>
            <person name="Thibaud-Nissen F."/>
            <person name="Schobel S."/>
            <person name="Town C.D."/>
        </authorList>
    </citation>
    <scope>GENOME REANNOTATION</scope>
    <source>
        <strain>cv. Columbia</strain>
    </source>
</reference>
<reference key="3">
    <citation type="journal article" date="2003" name="Science">
        <title>Empirical analysis of transcriptional activity in the Arabidopsis genome.</title>
        <authorList>
            <person name="Yamada K."/>
            <person name="Lim J."/>
            <person name="Dale J.M."/>
            <person name="Chen H."/>
            <person name="Shinn P."/>
            <person name="Palm C.J."/>
            <person name="Southwick A.M."/>
            <person name="Wu H.C."/>
            <person name="Kim C.J."/>
            <person name="Nguyen M."/>
            <person name="Pham P.K."/>
            <person name="Cheuk R.F."/>
            <person name="Karlin-Newmann G."/>
            <person name="Liu S.X."/>
            <person name="Lam B."/>
            <person name="Sakano H."/>
            <person name="Wu T."/>
            <person name="Yu G."/>
            <person name="Miranda M."/>
            <person name="Quach H.L."/>
            <person name="Tripp M."/>
            <person name="Chang C.H."/>
            <person name="Lee J.M."/>
            <person name="Toriumi M.J."/>
            <person name="Chan M.M."/>
            <person name="Tang C.C."/>
            <person name="Onodera C.S."/>
            <person name="Deng J.M."/>
            <person name="Akiyama K."/>
            <person name="Ansari Y."/>
            <person name="Arakawa T."/>
            <person name="Banh J."/>
            <person name="Banno F."/>
            <person name="Bowser L."/>
            <person name="Brooks S.Y."/>
            <person name="Carninci P."/>
            <person name="Chao Q."/>
            <person name="Choy N."/>
            <person name="Enju A."/>
            <person name="Goldsmith A.D."/>
            <person name="Gurjal M."/>
            <person name="Hansen N.F."/>
            <person name="Hayashizaki Y."/>
            <person name="Johnson-Hopson C."/>
            <person name="Hsuan V.W."/>
            <person name="Iida K."/>
            <person name="Karnes M."/>
            <person name="Khan S."/>
            <person name="Koesema E."/>
            <person name="Ishida J."/>
            <person name="Jiang P.X."/>
            <person name="Jones T."/>
            <person name="Kawai J."/>
            <person name="Kamiya A."/>
            <person name="Meyers C."/>
            <person name="Nakajima M."/>
            <person name="Narusaka M."/>
            <person name="Seki M."/>
            <person name="Sakurai T."/>
            <person name="Satou M."/>
            <person name="Tamse R."/>
            <person name="Vaysberg M."/>
            <person name="Wallender E.K."/>
            <person name="Wong C."/>
            <person name="Yamamura Y."/>
            <person name="Yuan S."/>
            <person name="Shinozaki K."/>
            <person name="Davis R.W."/>
            <person name="Theologis A."/>
            <person name="Ecker J.R."/>
        </authorList>
    </citation>
    <scope>NUCLEOTIDE SEQUENCE [LARGE SCALE MRNA]</scope>
    <source>
        <strain>cv. Columbia</strain>
    </source>
</reference>
<reference key="4">
    <citation type="submission" date="2006-07" db="EMBL/GenBank/DDBJ databases">
        <title>Large-scale analysis of RIKEN Arabidopsis full-length (RAFL) cDNAs.</title>
        <authorList>
            <person name="Totoki Y."/>
            <person name="Seki M."/>
            <person name="Ishida J."/>
            <person name="Nakajima M."/>
            <person name="Enju A."/>
            <person name="Kamiya A."/>
            <person name="Narusaka M."/>
            <person name="Shin-i T."/>
            <person name="Nakagawa M."/>
            <person name="Sakamoto N."/>
            <person name="Oishi K."/>
            <person name="Kohara Y."/>
            <person name="Kobayashi M."/>
            <person name="Toyoda A."/>
            <person name="Sakaki Y."/>
            <person name="Sakurai T."/>
            <person name="Iida K."/>
            <person name="Akiyama K."/>
            <person name="Satou M."/>
            <person name="Toyoda T."/>
            <person name="Konagaya A."/>
            <person name="Carninci P."/>
            <person name="Kawai J."/>
            <person name="Hayashizaki Y."/>
            <person name="Shinozaki K."/>
        </authorList>
    </citation>
    <scope>NUCLEOTIDE SEQUENCE [LARGE SCALE MRNA]</scope>
    <source>
        <strain>cv. Columbia</strain>
    </source>
</reference>
<reference key="5">
    <citation type="journal article" date="2004" name="Plant Cell">
        <title>Genome-wide analysis of Arabidopsis pentatricopeptide repeat proteins reveals their essential role in organelle biogenesis.</title>
        <authorList>
            <person name="Lurin C."/>
            <person name="Andres C."/>
            <person name="Aubourg S."/>
            <person name="Bellaoui M."/>
            <person name="Bitton F."/>
            <person name="Bruyere C."/>
            <person name="Caboche M."/>
            <person name="Debast C."/>
            <person name="Gualberto J."/>
            <person name="Hoffmann B."/>
            <person name="Lecharny A."/>
            <person name="Le Ret M."/>
            <person name="Martin-Magniette M.-L."/>
            <person name="Mireau H."/>
            <person name="Peeters N."/>
            <person name="Renou J.-P."/>
            <person name="Szurek B."/>
            <person name="Taconnat L."/>
            <person name="Small I."/>
        </authorList>
    </citation>
    <scope>GENE FAMILY</scope>
</reference>